<sequence length="173" mass="19485">MAEKRNIFLVGPMGAGKSTIGRQLAQQLNMEFYDSDQEIEKRTGADVGWVFDLEGEDGFRDREEKVINELTEKQGIVLATGGGSVKSRETRNRLSARGVVVYLETTIEKQLARTQRDKKRPLLQVEAPPREVLEALANERNPLYEEIADVTIRTDDQSAKVVANQIIHMLESN</sequence>
<feature type="chain" id="PRO_1000117464" description="Shikimate kinase 1">
    <location>
        <begin position="1"/>
        <end position="173"/>
    </location>
</feature>
<feature type="binding site" evidence="1">
    <location>
        <begin position="14"/>
        <end position="19"/>
    </location>
    <ligand>
        <name>ATP</name>
        <dbReference type="ChEBI" id="CHEBI:30616"/>
    </ligand>
</feature>
<feature type="binding site" evidence="1">
    <location>
        <position position="18"/>
    </location>
    <ligand>
        <name>Mg(2+)</name>
        <dbReference type="ChEBI" id="CHEBI:18420"/>
    </ligand>
</feature>
<feature type="binding site" evidence="1">
    <location>
        <position position="36"/>
    </location>
    <ligand>
        <name>substrate</name>
    </ligand>
</feature>
<feature type="binding site" evidence="1">
    <location>
        <position position="60"/>
    </location>
    <ligand>
        <name>substrate</name>
    </ligand>
</feature>
<feature type="binding site" evidence="1">
    <location>
        <position position="82"/>
    </location>
    <ligand>
        <name>substrate</name>
    </ligand>
</feature>
<feature type="binding site" evidence="1">
    <location>
        <position position="120"/>
    </location>
    <ligand>
        <name>ATP</name>
        <dbReference type="ChEBI" id="CHEBI:30616"/>
    </ligand>
</feature>
<feature type="binding site" evidence="1">
    <location>
        <position position="140"/>
    </location>
    <ligand>
        <name>substrate</name>
    </ligand>
</feature>
<feature type="binding site" evidence="1">
    <location>
        <position position="157"/>
    </location>
    <ligand>
        <name>ATP</name>
        <dbReference type="ChEBI" id="CHEBI:30616"/>
    </ligand>
</feature>
<organism>
    <name type="scientific">Escherichia fergusonii (strain ATCC 35469 / DSM 13698 / CCUG 18766 / IAM 14443 / JCM 21226 / LMG 7866 / NBRC 102419 / NCTC 12128 / CDC 0568-73)</name>
    <dbReference type="NCBI Taxonomy" id="585054"/>
    <lineage>
        <taxon>Bacteria</taxon>
        <taxon>Pseudomonadati</taxon>
        <taxon>Pseudomonadota</taxon>
        <taxon>Gammaproteobacteria</taxon>
        <taxon>Enterobacterales</taxon>
        <taxon>Enterobacteriaceae</taxon>
        <taxon>Escherichia</taxon>
    </lineage>
</organism>
<dbReference type="EC" id="2.7.1.71" evidence="1"/>
<dbReference type="EMBL" id="CU928158">
    <property type="protein sequence ID" value="CAQ90834.1"/>
    <property type="molecule type" value="Genomic_DNA"/>
</dbReference>
<dbReference type="RefSeq" id="WP_000818617.1">
    <property type="nucleotide sequence ID" value="NC_011740.1"/>
</dbReference>
<dbReference type="SMR" id="B7LS91"/>
<dbReference type="GeneID" id="75060036"/>
<dbReference type="KEGG" id="efe:EFER_3356"/>
<dbReference type="HOGENOM" id="CLU_057607_2_2_6"/>
<dbReference type="OrthoDB" id="9800332at2"/>
<dbReference type="UniPathway" id="UPA00053">
    <property type="reaction ID" value="UER00088"/>
</dbReference>
<dbReference type="Proteomes" id="UP000000745">
    <property type="component" value="Chromosome"/>
</dbReference>
<dbReference type="GO" id="GO:0005829">
    <property type="term" value="C:cytosol"/>
    <property type="evidence" value="ECO:0007669"/>
    <property type="project" value="TreeGrafter"/>
</dbReference>
<dbReference type="GO" id="GO:0005524">
    <property type="term" value="F:ATP binding"/>
    <property type="evidence" value="ECO:0007669"/>
    <property type="project" value="UniProtKB-UniRule"/>
</dbReference>
<dbReference type="GO" id="GO:0000287">
    <property type="term" value="F:magnesium ion binding"/>
    <property type="evidence" value="ECO:0007669"/>
    <property type="project" value="UniProtKB-UniRule"/>
</dbReference>
<dbReference type="GO" id="GO:0004765">
    <property type="term" value="F:shikimate kinase activity"/>
    <property type="evidence" value="ECO:0007669"/>
    <property type="project" value="UniProtKB-UniRule"/>
</dbReference>
<dbReference type="GO" id="GO:0008652">
    <property type="term" value="P:amino acid biosynthetic process"/>
    <property type="evidence" value="ECO:0007669"/>
    <property type="project" value="UniProtKB-KW"/>
</dbReference>
<dbReference type="GO" id="GO:0009073">
    <property type="term" value="P:aromatic amino acid family biosynthetic process"/>
    <property type="evidence" value="ECO:0007669"/>
    <property type="project" value="UniProtKB-KW"/>
</dbReference>
<dbReference type="GO" id="GO:0009423">
    <property type="term" value="P:chorismate biosynthetic process"/>
    <property type="evidence" value="ECO:0007669"/>
    <property type="project" value="UniProtKB-UniRule"/>
</dbReference>
<dbReference type="CDD" id="cd00464">
    <property type="entry name" value="SK"/>
    <property type="match status" value="1"/>
</dbReference>
<dbReference type="FunFam" id="3.40.50.300:FF:000099">
    <property type="entry name" value="Shikimate kinase 1"/>
    <property type="match status" value="1"/>
</dbReference>
<dbReference type="Gene3D" id="3.40.50.300">
    <property type="entry name" value="P-loop containing nucleotide triphosphate hydrolases"/>
    <property type="match status" value="1"/>
</dbReference>
<dbReference type="HAMAP" id="MF_00109">
    <property type="entry name" value="Shikimate_kinase"/>
    <property type="match status" value="1"/>
</dbReference>
<dbReference type="InterPro" id="IPR027417">
    <property type="entry name" value="P-loop_NTPase"/>
</dbReference>
<dbReference type="InterPro" id="IPR031322">
    <property type="entry name" value="Shikimate/glucono_kinase"/>
</dbReference>
<dbReference type="InterPro" id="IPR000623">
    <property type="entry name" value="Shikimate_kinase/TSH1"/>
</dbReference>
<dbReference type="InterPro" id="IPR023000">
    <property type="entry name" value="Shikimate_kinase_CS"/>
</dbReference>
<dbReference type="NCBIfam" id="NF003456">
    <property type="entry name" value="PRK05057.1"/>
    <property type="match status" value="1"/>
</dbReference>
<dbReference type="PANTHER" id="PTHR21087">
    <property type="entry name" value="SHIKIMATE KINASE"/>
    <property type="match status" value="1"/>
</dbReference>
<dbReference type="PANTHER" id="PTHR21087:SF16">
    <property type="entry name" value="SHIKIMATE KINASE 1, CHLOROPLASTIC"/>
    <property type="match status" value="1"/>
</dbReference>
<dbReference type="Pfam" id="PF01202">
    <property type="entry name" value="SKI"/>
    <property type="match status" value="1"/>
</dbReference>
<dbReference type="PRINTS" id="PR01100">
    <property type="entry name" value="SHIKIMTKNASE"/>
</dbReference>
<dbReference type="SUPFAM" id="SSF52540">
    <property type="entry name" value="P-loop containing nucleoside triphosphate hydrolases"/>
    <property type="match status" value="1"/>
</dbReference>
<dbReference type="PROSITE" id="PS01128">
    <property type="entry name" value="SHIKIMATE_KINASE"/>
    <property type="match status" value="1"/>
</dbReference>
<evidence type="ECO:0000255" key="1">
    <source>
        <dbReference type="HAMAP-Rule" id="MF_00109"/>
    </source>
</evidence>
<proteinExistence type="inferred from homology"/>
<gene>
    <name evidence="1" type="primary">aroK</name>
    <name type="ordered locus">EFER_3356</name>
</gene>
<keyword id="KW-0028">Amino-acid biosynthesis</keyword>
<keyword id="KW-0057">Aromatic amino acid biosynthesis</keyword>
<keyword id="KW-0067">ATP-binding</keyword>
<keyword id="KW-0963">Cytoplasm</keyword>
<keyword id="KW-0418">Kinase</keyword>
<keyword id="KW-0460">Magnesium</keyword>
<keyword id="KW-0479">Metal-binding</keyword>
<keyword id="KW-0547">Nucleotide-binding</keyword>
<keyword id="KW-0808">Transferase</keyword>
<name>AROK_ESCF3</name>
<comment type="function">
    <text evidence="1">Catalyzes the specific phosphorylation of the 3-hydroxyl group of shikimic acid using ATP as a cosubstrate.</text>
</comment>
<comment type="catalytic activity">
    <reaction evidence="1">
        <text>shikimate + ATP = 3-phosphoshikimate + ADP + H(+)</text>
        <dbReference type="Rhea" id="RHEA:13121"/>
        <dbReference type="ChEBI" id="CHEBI:15378"/>
        <dbReference type="ChEBI" id="CHEBI:30616"/>
        <dbReference type="ChEBI" id="CHEBI:36208"/>
        <dbReference type="ChEBI" id="CHEBI:145989"/>
        <dbReference type="ChEBI" id="CHEBI:456216"/>
        <dbReference type="EC" id="2.7.1.71"/>
    </reaction>
</comment>
<comment type="cofactor">
    <cofactor evidence="1">
        <name>Mg(2+)</name>
        <dbReference type="ChEBI" id="CHEBI:18420"/>
    </cofactor>
    <text evidence="1">Binds 1 Mg(2+) ion per subunit.</text>
</comment>
<comment type="pathway">
    <text evidence="1">Metabolic intermediate biosynthesis; chorismate biosynthesis; chorismate from D-erythrose 4-phosphate and phosphoenolpyruvate: step 5/7.</text>
</comment>
<comment type="subunit">
    <text evidence="1">Monomer.</text>
</comment>
<comment type="subcellular location">
    <subcellularLocation>
        <location evidence="1">Cytoplasm</location>
    </subcellularLocation>
</comment>
<comment type="similarity">
    <text evidence="1">Belongs to the shikimate kinase family.</text>
</comment>
<accession>B7LS91</accession>
<reference key="1">
    <citation type="journal article" date="2009" name="PLoS Genet.">
        <title>Organised genome dynamics in the Escherichia coli species results in highly diverse adaptive paths.</title>
        <authorList>
            <person name="Touchon M."/>
            <person name="Hoede C."/>
            <person name="Tenaillon O."/>
            <person name="Barbe V."/>
            <person name="Baeriswyl S."/>
            <person name="Bidet P."/>
            <person name="Bingen E."/>
            <person name="Bonacorsi S."/>
            <person name="Bouchier C."/>
            <person name="Bouvet O."/>
            <person name="Calteau A."/>
            <person name="Chiapello H."/>
            <person name="Clermont O."/>
            <person name="Cruveiller S."/>
            <person name="Danchin A."/>
            <person name="Diard M."/>
            <person name="Dossat C."/>
            <person name="Karoui M.E."/>
            <person name="Frapy E."/>
            <person name="Garry L."/>
            <person name="Ghigo J.M."/>
            <person name="Gilles A.M."/>
            <person name="Johnson J."/>
            <person name="Le Bouguenec C."/>
            <person name="Lescat M."/>
            <person name="Mangenot S."/>
            <person name="Martinez-Jehanne V."/>
            <person name="Matic I."/>
            <person name="Nassif X."/>
            <person name="Oztas S."/>
            <person name="Petit M.A."/>
            <person name="Pichon C."/>
            <person name="Rouy Z."/>
            <person name="Ruf C.S."/>
            <person name="Schneider D."/>
            <person name="Tourret J."/>
            <person name="Vacherie B."/>
            <person name="Vallenet D."/>
            <person name="Medigue C."/>
            <person name="Rocha E.P.C."/>
            <person name="Denamur E."/>
        </authorList>
    </citation>
    <scope>NUCLEOTIDE SEQUENCE [LARGE SCALE GENOMIC DNA]</scope>
    <source>
        <strain>ATCC 35469 / DSM 13698 / BCRC 15582 / CCUG 18766 / IAM 14443 / JCM 21226 / LMG 7866 / NBRC 102419 / NCTC 12128 / CDC 0568-73</strain>
    </source>
</reference>
<protein>
    <recommendedName>
        <fullName evidence="1">Shikimate kinase 1</fullName>
        <shortName evidence="1">SK 1</shortName>
        <ecNumber evidence="1">2.7.1.71</ecNumber>
    </recommendedName>
</protein>